<reference key="1">
    <citation type="journal article" date="2011" name="J. Bacteriol.">
        <title>Comparative genomics of 28 Salmonella enterica isolates: evidence for CRISPR-mediated adaptive sublineage evolution.</title>
        <authorList>
            <person name="Fricke W.F."/>
            <person name="Mammel M.K."/>
            <person name="McDermott P.F."/>
            <person name="Tartera C."/>
            <person name="White D.G."/>
            <person name="Leclerc J.E."/>
            <person name="Ravel J."/>
            <person name="Cebula T.A."/>
        </authorList>
    </citation>
    <scope>NUCLEOTIDE SEQUENCE [LARGE SCALE GENOMIC DNA]</scope>
    <source>
        <strain>SL254</strain>
    </source>
</reference>
<evidence type="ECO:0000255" key="1">
    <source>
        <dbReference type="HAMAP-Rule" id="MF_00524"/>
    </source>
</evidence>
<dbReference type="EC" id="2.7.1.2" evidence="1"/>
<dbReference type="EMBL" id="CP001113">
    <property type="protein sequence ID" value="ACF65612.1"/>
    <property type="molecule type" value="Genomic_DNA"/>
</dbReference>
<dbReference type="RefSeq" id="WP_000170380.1">
    <property type="nucleotide sequence ID" value="NZ_CCMR01000001.1"/>
</dbReference>
<dbReference type="SMR" id="B4SZS6"/>
<dbReference type="KEGG" id="see:SNSL254_A2595"/>
<dbReference type="HOGENOM" id="CLU_042582_1_0_6"/>
<dbReference type="Proteomes" id="UP000008824">
    <property type="component" value="Chromosome"/>
</dbReference>
<dbReference type="GO" id="GO:0005829">
    <property type="term" value="C:cytosol"/>
    <property type="evidence" value="ECO:0007669"/>
    <property type="project" value="TreeGrafter"/>
</dbReference>
<dbReference type="GO" id="GO:0005524">
    <property type="term" value="F:ATP binding"/>
    <property type="evidence" value="ECO:0007669"/>
    <property type="project" value="UniProtKB-UniRule"/>
</dbReference>
<dbReference type="GO" id="GO:0005536">
    <property type="term" value="F:D-glucose binding"/>
    <property type="evidence" value="ECO:0007669"/>
    <property type="project" value="InterPro"/>
</dbReference>
<dbReference type="GO" id="GO:0004340">
    <property type="term" value="F:glucokinase activity"/>
    <property type="evidence" value="ECO:0007669"/>
    <property type="project" value="UniProtKB-UniRule"/>
</dbReference>
<dbReference type="GO" id="GO:0006096">
    <property type="term" value="P:glycolytic process"/>
    <property type="evidence" value="ECO:0007669"/>
    <property type="project" value="UniProtKB-UniRule"/>
</dbReference>
<dbReference type="CDD" id="cd24008">
    <property type="entry name" value="ASKHA_NBD_GLK"/>
    <property type="match status" value="1"/>
</dbReference>
<dbReference type="FunFam" id="3.30.420.40:FF:000045">
    <property type="entry name" value="Glucokinase"/>
    <property type="match status" value="1"/>
</dbReference>
<dbReference type="FunFam" id="3.40.367.20:FF:000002">
    <property type="entry name" value="Glucokinase"/>
    <property type="match status" value="1"/>
</dbReference>
<dbReference type="Gene3D" id="3.30.420.40">
    <property type="match status" value="1"/>
</dbReference>
<dbReference type="Gene3D" id="3.40.367.20">
    <property type="match status" value="1"/>
</dbReference>
<dbReference type="HAMAP" id="MF_00524">
    <property type="entry name" value="Glucokinase"/>
    <property type="match status" value="1"/>
</dbReference>
<dbReference type="InterPro" id="IPR043129">
    <property type="entry name" value="ATPase_NBD"/>
</dbReference>
<dbReference type="InterPro" id="IPR050201">
    <property type="entry name" value="Bacterial_glucokinase"/>
</dbReference>
<dbReference type="InterPro" id="IPR003836">
    <property type="entry name" value="Glucokinase"/>
</dbReference>
<dbReference type="NCBIfam" id="TIGR00749">
    <property type="entry name" value="glk"/>
    <property type="match status" value="1"/>
</dbReference>
<dbReference type="NCBIfam" id="NF001414">
    <property type="entry name" value="PRK00292.1-1"/>
    <property type="match status" value="1"/>
</dbReference>
<dbReference type="NCBIfam" id="NF001416">
    <property type="entry name" value="PRK00292.1-3"/>
    <property type="match status" value="1"/>
</dbReference>
<dbReference type="PANTHER" id="PTHR47690">
    <property type="entry name" value="GLUCOKINASE"/>
    <property type="match status" value="1"/>
</dbReference>
<dbReference type="PANTHER" id="PTHR47690:SF1">
    <property type="entry name" value="GLUCOKINASE"/>
    <property type="match status" value="1"/>
</dbReference>
<dbReference type="Pfam" id="PF02685">
    <property type="entry name" value="Glucokinase"/>
    <property type="match status" value="1"/>
</dbReference>
<dbReference type="SUPFAM" id="SSF53067">
    <property type="entry name" value="Actin-like ATPase domain"/>
    <property type="match status" value="1"/>
</dbReference>
<proteinExistence type="inferred from homology"/>
<comment type="catalytic activity">
    <reaction evidence="1">
        <text>D-glucose + ATP = D-glucose 6-phosphate + ADP + H(+)</text>
        <dbReference type="Rhea" id="RHEA:17825"/>
        <dbReference type="ChEBI" id="CHEBI:4167"/>
        <dbReference type="ChEBI" id="CHEBI:15378"/>
        <dbReference type="ChEBI" id="CHEBI:30616"/>
        <dbReference type="ChEBI" id="CHEBI:61548"/>
        <dbReference type="ChEBI" id="CHEBI:456216"/>
        <dbReference type="EC" id="2.7.1.2"/>
    </reaction>
</comment>
<comment type="subcellular location">
    <subcellularLocation>
        <location evidence="1">Cytoplasm</location>
    </subcellularLocation>
</comment>
<comment type="similarity">
    <text evidence="1">Belongs to the bacterial glucokinase family.</text>
</comment>
<gene>
    <name evidence="1" type="primary">glk</name>
    <name type="ordered locus">SNSL254_A2595</name>
</gene>
<keyword id="KW-0067">ATP-binding</keyword>
<keyword id="KW-0963">Cytoplasm</keyword>
<keyword id="KW-0324">Glycolysis</keyword>
<keyword id="KW-0418">Kinase</keyword>
<keyword id="KW-0547">Nucleotide-binding</keyword>
<keyword id="KW-0808">Transferase</keyword>
<feature type="chain" id="PRO_1000127722" description="Glucokinase">
    <location>
        <begin position="1"/>
        <end position="321"/>
    </location>
</feature>
<feature type="binding site" evidence="1">
    <location>
        <begin position="8"/>
        <end position="13"/>
    </location>
    <ligand>
        <name>ATP</name>
        <dbReference type="ChEBI" id="CHEBI:30616"/>
    </ligand>
</feature>
<organism>
    <name type="scientific">Salmonella newport (strain SL254)</name>
    <dbReference type="NCBI Taxonomy" id="423368"/>
    <lineage>
        <taxon>Bacteria</taxon>
        <taxon>Pseudomonadati</taxon>
        <taxon>Pseudomonadota</taxon>
        <taxon>Gammaproteobacteria</taxon>
        <taxon>Enterobacterales</taxon>
        <taxon>Enterobacteriaceae</taxon>
        <taxon>Salmonella</taxon>
    </lineage>
</organism>
<accession>B4SZS6</accession>
<protein>
    <recommendedName>
        <fullName evidence="1">Glucokinase</fullName>
        <ecNumber evidence="1">2.7.1.2</ecNumber>
    </recommendedName>
    <alternativeName>
        <fullName evidence="1">Glucose kinase</fullName>
    </alternativeName>
</protein>
<sequence>MTKYALVGDVGGTNARLALCDIASGEISQAKTYSGLDYPSLEAVVRVYLDEHSVSVEDGCIAIACPITGDWVAMTNHTWAFSIAEMKKNLGFSHLEIINDFTAVSMAIPMLKKEHLIQFGGGEPVDGKPIAVYGAGTGLGVAHLVHVDKRWISLPGEGGHVDFAPNSEEEAMILEILRAEIGHVSAERVLSGPGLVNLYRAIVKSDNRLPENLRPKDITERALADSCIDCRRALSLFCVIMGRFGGDLALTMGTFGGVYIAGGIVPRFLEFFKASGFRGGFEDKGRFKDYVHGIPVYLIVHDNPGLLGSGAHLRQTLGHIL</sequence>
<name>GLK_SALNS</name>